<feature type="chain" id="PRO_0000223455" description="Urease accessory protein UreE">
    <location>
        <begin position="1"/>
        <end position="230"/>
    </location>
</feature>
<feature type="region of interest" description="Disordered" evidence="2">
    <location>
        <begin position="197"/>
        <end position="230"/>
    </location>
</feature>
<feature type="compositionally biased region" description="Basic and acidic residues" evidence="2">
    <location>
        <begin position="204"/>
        <end position="230"/>
    </location>
</feature>
<comment type="function">
    <text evidence="1">Involved in urease metallocenter assembly. Binds nickel. Probably functions as a nickel donor during metallocenter assembly.</text>
</comment>
<comment type="subcellular location">
    <subcellularLocation>
        <location evidence="1">Cytoplasm</location>
    </subcellularLocation>
</comment>
<comment type="similarity">
    <text evidence="1">Belongs to the UreE family.</text>
</comment>
<proteinExistence type="inferred from homology"/>
<reference key="1">
    <citation type="submission" date="2003-08" db="EMBL/GenBank/DDBJ databases">
        <title>Yersinia aldovae urease gene locus (ureABCEFGD) and urea transporter gene (yut).</title>
        <authorList>
            <person name="Sebbane F."/>
            <person name="Lemaitre N."/>
            <person name="Simonet M."/>
        </authorList>
    </citation>
    <scope>NUCLEOTIDE SEQUENCE [GENOMIC DNA]</scope>
</reference>
<accession>Q6UR83</accession>
<protein>
    <recommendedName>
        <fullName evidence="1">Urease accessory protein UreE</fullName>
    </recommendedName>
</protein>
<name>UREE_YERAL</name>
<sequence length="230" mass="25701">MILIEHVLGNVKKDPVWQEKLKHATLDLLVLDQREAQKSRCRKSTTHGLDLGISLDRNVVLADGDVLAWDEETNVAVVVQINLRDVMVIDLSELKSRSPDELIKTCFELGHALGNQHWKAVTKNNEVYVPLTVATTMMDSVMRTHGFQHLPFRFVKGGEILPQLSNSEARLLFGGAEDSDTHVHVASPLDEPHGSGLHIHAIHSHGDGDSHNHDHDHSHSHGDHDHDHKH</sequence>
<keyword id="KW-0143">Chaperone</keyword>
<keyword id="KW-0963">Cytoplasm</keyword>
<keyword id="KW-0533">Nickel</keyword>
<keyword id="KW-0996">Nickel insertion</keyword>
<gene>
    <name evidence="1" type="primary">ureE</name>
</gene>
<evidence type="ECO:0000255" key="1">
    <source>
        <dbReference type="HAMAP-Rule" id="MF_00822"/>
    </source>
</evidence>
<evidence type="ECO:0000256" key="2">
    <source>
        <dbReference type="SAM" id="MobiDB-lite"/>
    </source>
</evidence>
<dbReference type="EMBL" id="AY363680">
    <property type="protein sequence ID" value="AAR15087.1"/>
    <property type="molecule type" value="Genomic_DNA"/>
</dbReference>
<dbReference type="RefSeq" id="WP_049596211.1">
    <property type="nucleotide sequence ID" value="NZ_CABHPY010000007.1"/>
</dbReference>
<dbReference type="SMR" id="Q6UR83"/>
<dbReference type="STRING" id="1453495.AT01_3437"/>
<dbReference type="eggNOG" id="COG2371">
    <property type="taxonomic scope" value="Bacteria"/>
</dbReference>
<dbReference type="OrthoDB" id="3394858at2"/>
<dbReference type="GO" id="GO:0005737">
    <property type="term" value="C:cytoplasm"/>
    <property type="evidence" value="ECO:0007669"/>
    <property type="project" value="UniProtKB-SubCell"/>
</dbReference>
<dbReference type="GO" id="GO:0016151">
    <property type="term" value="F:nickel cation binding"/>
    <property type="evidence" value="ECO:0007669"/>
    <property type="project" value="UniProtKB-UniRule"/>
</dbReference>
<dbReference type="GO" id="GO:0051082">
    <property type="term" value="F:unfolded protein binding"/>
    <property type="evidence" value="ECO:0007669"/>
    <property type="project" value="UniProtKB-UniRule"/>
</dbReference>
<dbReference type="GO" id="GO:0006457">
    <property type="term" value="P:protein folding"/>
    <property type="evidence" value="ECO:0007669"/>
    <property type="project" value="InterPro"/>
</dbReference>
<dbReference type="CDD" id="cd00571">
    <property type="entry name" value="UreE"/>
    <property type="match status" value="1"/>
</dbReference>
<dbReference type="Gene3D" id="2.60.260.20">
    <property type="entry name" value="Urease metallochaperone UreE, N-terminal domain"/>
    <property type="match status" value="1"/>
</dbReference>
<dbReference type="HAMAP" id="MF_00822">
    <property type="entry name" value="UreE"/>
    <property type="match status" value="1"/>
</dbReference>
<dbReference type="InterPro" id="IPR012406">
    <property type="entry name" value="UreE"/>
</dbReference>
<dbReference type="InterPro" id="IPR004029">
    <property type="entry name" value="UreE_N"/>
</dbReference>
<dbReference type="InterPro" id="IPR036118">
    <property type="entry name" value="UreE_N_sf"/>
</dbReference>
<dbReference type="NCBIfam" id="NF009761">
    <property type="entry name" value="PRK13262.1"/>
    <property type="match status" value="1"/>
</dbReference>
<dbReference type="Pfam" id="PF02814">
    <property type="entry name" value="UreE_N"/>
    <property type="match status" value="1"/>
</dbReference>
<dbReference type="SMART" id="SM00988">
    <property type="entry name" value="UreE_N"/>
    <property type="match status" value="1"/>
</dbReference>
<dbReference type="SUPFAM" id="SSF69287">
    <property type="entry name" value="Urease metallochaperone UreE, N-terminal domain"/>
    <property type="match status" value="1"/>
</dbReference>
<organism>
    <name type="scientific">Yersinia aldovae</name>
    <dbReference type="NCBI Taxonomy" id="29483"/>
    <lineage>
        <taxon>Bacteria</taxon>
        <taxon>Pseudomonadati</taxon>
        <taxon>Pseudomonadota</taxon>
        <taxon>Gammaproteobacteria</taxon>
        <taxon>Enterobacterales</taxon>
        <taxon>Yersiniaceae</taxon>
        <taxon>Yersinia</taxon>
    </lineage>
</organism>